<dbReference type="EMBL" id="CP000568">
    <property type="protein sequence ID" value="ABN53036.1"/>
    <property type="molecule type" value="Genomic_DNA"/>
</dbReference>
<dbReference type="RefSeq" id="WP_003515810.1">
    <property type="nucleotide sequence ID" value="NC_009012.1"/>
</dbReference>
<dbReference type="SMR" id="A3DGF7"/>
<dbReference type="STRING" id="203119.Cthe_1815"/>
<dbReference type="GeneID" id="35803851"/>
<dbReference type="KEGG" id="cth:Cthe_1815"/>
<dbReference type="eggNOG" id="COG2371">
    <property type="taxonomic scope" value="Bacteria"/>
</dbReference>
<dbReference type="HOGENOM" id="CLU_093757_3_0_9"/>
<dbReference type="OrthoDB" id="9810882at2"/>
<dbReference type="Proteomes" id="UP000002145">
    <property type="component" value="Chromosome"/>
</dbReference>
<dbReference type="GO" id="GO:0005737">
    <property type="term" value="C:cytoplasm"/>
    <property type="evidence" value="ECO:0007669"/>
    <property type="project" value="UniProtKB-SubCell"/>
</dbReference>
<dbReference type="GO" id="GO:0016151">
    <property type="term" value="F:nickel cation binding"/>
    <property type="evidence" value="ECO:0007669"/>
    <property type="project" value="UniProtKB-UniRule"/>
</dbReference>
<dbReference type="GO" id="GO:0051082">
    <property type="term" value="F:unfolded protein binding"/>
    <property type="evidence" value="ECO:0007669"/>
    <property type="project" value="UniProtKB-UniRule"/>
</dbReference>
<dbReference type="GO" id="GO:0006457">
    <property type="term" value="P:protein folding"/>
    <property type="evidence" value="ECO:0007669"/>
    <property type="project" value="InterPro"/>
</dbReference>
<dbReference type="GO" id="GO:0065003">
    <property type="term" value="P:protein-containing complex assembly"/>
    <property type="evidence" value="ECO:0007669"/>
    <property type="project" value="InterPro"/>
</dbReference>
<dbReference type="GO" id="GO:0019627">
    <property type="term" value="P:urea metabolic process"/>
    <property type="evidence" value="ECO:0007669"/>
    <property type="project" value="InterPro"/>
</dbReference>
<dbReference type="CDD" id="cd00571">
    <property type="entry name" value="UreE"/>
    <property type="match status" value="1"/>
</dbReference>
<dbReference type="Gene3D" id="2.60.260.20">
    <property type="entry name" value="Urease metallochaperone UreE, N-terminal domain"/>
    <property type="match status" value="1"/>
</dbReference>
<dbReference type="Gene3D" id="3.30.70.790">
    <property type="entry name" value="UreE, C-terminal domain"/>
    <property type="match status" value="1"/>
</dbReference>
<dbReference type="HAMAP" id="MF_00822">
    <property type="entry name" value="UreE"/>
    <property type="match status" value="1"/>
</dbReference>
<dbReference type="InterPro" id="IPR012406">
    <property type="entry name" value="UreE"/>
</dbReference>
<dbReference type="InterPro" id="IPR007864">
    <property type="entry name" value="UreE_C_dom"/>
</dbReference>
<dbReference type="InterPro" id="IPR004029">
    <property type="entry name" value="UreE_N"/>
</dbReference>
<dbReference type="InterPro" id="IPR036118">
    <property type="entry name" value="UreE_N_sf"/>
</dbReference>
<dbReference type="NCBIfam" id="NF009754">
    <property type="entry name" value="PRK13261.1-6"/>
    <property type="match status" value="1"/>
</dbReference>
<dbReference type="Pfam" id="PF05194">
    <property type="entry name" value="UreE_C"/>
    <property type="match status" value="1"/>
</dbReference>
<dbReference type="Pfam" id="PF02814">
    <property type="entry name" value="UreE_N"/>
    <property type="match status" value="1"/>
</dbReference>
<dbReference type="PIRSF" id="PIRSF036402">
    <property type="entry name" value="Ureas_acces_UreE"/>
    <property type="match status" value="1"/>
</dbReference>
<dbReference type="SMART" id="SM00988">
    <property type="entry name" value="UreE_N"/>
    <property type="match status" value="1"/>
</dbReference>
<dbReference type="SUPFAM" id="SSF69737">
    <property type="entry name" value="Urease metallochaperone UreE, C-terminal domain"/>
    <property type="match status" value="1"/>
</dbReference>
<dbReference type="SUPFAM" id="SSF69287">
    <property type="entry name" value="Urease metallochaperone UreE, N-terminal domain"/>
    <property type="match status" value="1"/>
</dbReference>
<accession>A3DGF7</accession>
<feature type="chain" id="PRO_1000083889" description="Urease accessory protein UreE">
    <location>
        <begin position="1"/>
        <end position="153"/>
    </location>
</feature>
<name>UREE_ACET2</name>
<organism>
    <name type="scientific">Acetivibrio thermocellus (strain ATCC 27405 / DSM 1237 / JCM 9322 / NBRC 103400 / NCIMB 10682 / NRRL B-4536 / VPI 7372)</name>
    <name type="common">Clostridium thermocellum</name>
    <dbReference type="NCBI Taxonomy" id="203119"/>
    <lineage>
        <taxon>Bacteria</taxon>
        <taxon>Bacillati</taxon>
        <taxon>Bacillota</taxon>
        <taxon>Clostridia</taxon>
        <taxon>Eubacteriales</taxon>
        <taxon>Oscillospiraceae</taxon>
        <taxon>Acetivibrio</taxon>
    </lineage>
</organism>
<comment type="function">
    <text evidence="1">Involved in urease metallocenter assembly. Binds nickel. Probably functions as a nickel donor during metallocenter assembly.</text>
</comment>
<comment type="subcellular location">
    <subcellularLocation>
        <location evidence="1">Cytoplasm</location>
    </subcellularLocation>
</comment>
<comment type="similarity">
    <text evidence="1">Belongs to the UreE family.</text>
</comment>
<evidence type="ECO:0000255" key="1">
    <source>
        <dbReference type="HAMAP-Rule" id="MF_00822"/>
    </source>
</evidence>
<sequence>MIVERVLYNIKDIDLEKLEVDFVDIEWYEVQKKILRKLSSNGIEVGIRNSNGEALKEGDVLWQEGNKVLVVRIPYCDCIVLKPQNMYEMGKTCYEMGNRHAPLFIDGDELMTPYDEPLMQALIKCGLSPYKKSCKLTTPLGGNLHGYSHSHSH</sequence>
<keyword id="KW-0143">Chaperone</keyword>
<keyword id="KW-0963">Cytoplasm</keyword>
<keyword id="KW-0533">Nickel</keyword>
<keyword id="KW-0996">Nickel insertion</keyword>
<keyword id="KW-1185">Reference proteome</keyword>
<proteinExistence type="inferred from homology"/>
<protein>
    <recommendedName>
        <fullName evidence="1">Urease accessory protein UreE</fullName>
    </recommendedName>
</protein>
<gene>
    <name evidence="1" type="primary">ureE</name>
    <name type="ordered locus">Cthe_1815</name>
</gene>
<reference key="1">
    <citation type="submission" date="2007-02" db="EMBL/GenBank/DDBJ databases">
        <title>Complete sequence of Clostridium thermocellum ATCC 27405.</title>
        <authorList>
            <consortium name="US DOE Joint Genome Institute"/>
            <person name="Copeland A."/>
            <person name="Lucas S."/>
            <person name="Lapidus A."/>
            <person name="Barry K."/>
            <person name="Detter J.C."/>
            <person name="Glavina del Rio T."/>
            <person name="Hammon N."/>
            <person name="Israni S."/>
            <person name="Dalin E."/>
            <person name="Tice H."/>
            <person name="Pitluck S."/>
            <person name="Chertkov O."/>
            <person name="Brettin T."/>
            <person name="Bruce D."/>
            <person name="Han C."/>
            <person name="Tapia R."/>
            <person name="Gilna P."/>
            <person name="Schmutz J."/>
            <person name="Larimer F."/>
            <person name="Land M."/>
            <person name="Hauser L."/>
            <person name="Kyrpides N."/>
            <person name="Mikhailova N."/>
            <person name="Wu J.H.D."/>
            <person name="Newcomb M."/>
            <person name="Richardson P."/>
        </authorList>
    </citation>
    <scope>NUCLEOTIDE SEQUENCE [LARGE SCALE GENOMIC DNA]</scope>
    <source>
        <strain>ATCC 27405 / DSM 1237 / JCM 9322 / NBRC 103400 / NCIMB 10682 / NRRL B-4536 / VPI 7372</strain>
    </source>
</reference>